<name>PROB_SALAR</name>
<evidence type="ECO:0000255" key="1">
    <source>
        <dbReference type="HAMAP-Rule" id="MF_00456"/>
    </source>
</evidence>
<comment type="function">
    <text evidence="1">Catalyzes the transfer of a phosphate group to glutamate to form L-glutamate 5-phosphate.</text>
</comment>
<comment type="catalytic activity">
    <reaction evidence="1">
        <text>L-glutamate + ATP = L-glutamyl 5-phosphate + ADP</text>
        <dbReference type="Rhea" id="RHEA:14877"/>
        <dbReference type="ChEBI" id="CHEBI:29985"/>
        <dbReference type="ChEBI" id="CHEBI:30616"/>
        <dbReference type="ChEBI" id="CHEBI:58274"/>
        <dbReference type="ChEBI" id="CHEBI:456216"/>
        <dbReference type="EC" id="2.7.2.11"/>
    </reaction>
</comment>
<comment type="pathway">
    <text evidence="1">Amino-acid biosynthesis; L-proline biosynthesis; L-glutamate 5-semialdehyde from L-glutamate: step 1/2.</text>
</comment>
<comment type="subcellular location">
    <subcellularLocation>
        <location evidence="1">Cytoplasm</location>
    </subcellularLocation>
</comment>
<comment type="similarity">
    <text evidence="1">Belongs to the glutamate 5-kinase family.</text>
</comment>
<protein>
    <recommendedName>
        <fullName evidence="1">Glutamate 5-kinase</fullName>
        <ecNumber evidence="1">2.7.2.11</ecNumber>
    </recommendedName>
    <alternativeName>
        <fullName evidence="1">Gamma-glutamyl kinase</fullName>
        <shortName evidence="1">GK</shortName>
    </alternativeName>
</protein>
<organism>
    <name type="scientific">Salmonella arizonae (strain ATCC BAA-731 / CDC346-86 / RSK2980)</name>
    <dbReference type="NCBI Taxonomy" id="41514"/>
    <lineage>
        <taxon>Bacteria</taxon>
        <taxon>Pseudomonadati</taxon>
        <taxon>Pseudomonadota</taxon>
        <taxon>Gammaproteobacteria</taxon>
        <taxon>Enterobacterales</taxon>
        <taxon>Enterobacteriaceae</taxon>
        <taxon>Salmonella</taxon>
    </lineage>
</organism>
<reference key="1">
    <citation type="submission" date="2007-11" db="EMBL/GenBank/DDBJ databases">
        <authorList>
            <consortium name="The Salmonella enterica serovar Arizonae Genome Sequencing Project"/>
            <person name="McClelland M."/>
            <person name="Sanderson E.K."/>
            <person name="Porwollik S."/>
            <person name="Spieth J."/>
            <person name="Clifton W.S."/>
            <person name="Fulton R."/>
            <person name="Chunyan W."/>
            <person name="Wollam A."/>
            <person name="Shah N."/>
            <person name="Pepin K."/>
            <person name="Bhonagiri V."/>
            <person name="Nash W."/>
            <person name="Johnson M."/>
            <person name="Thiruvilangam P."/>
            <person name="Wilson R."/>
        </authorList>
    </citation>
    <scope>NUCLEOTIDE SEQUENCE [LARGE SCALE GENOMIC DNA]</scope>
    <source>
        <strain>ATCC BAA-731 / CDC346-86 / RSK2980</strain>
    </source>
</reference>
<gene>
    <name evidence="1" type="primary">proB</name>
    <name type="ordered locus">SARI_02691</name>
</gene>
<accession>A9MNR5</accession>
<proteinExistence type="inferred from homology"/>
<sequence length="367" mass="39239">MSDSQTLVVKLGTSVLTGGSRRLNRAHIVELVRQCAQLHAAGHRIVIVTSGAIAAGREHLGYPELPVTIASKQLLAAVGQSRLIQLWEQLFSIYGIHIGQMLLTRADMEDRERFLNARDMLRALLDNHIVPIINENDAVATVEIKVGDNDNLSALAAILAGADKLLLLTDQQGLFTADPRSNPQAELIKDVYGVDDALRSIAGDSVSGLGTGGMSTKLQAADVACRAGIDTIIASGSKPGVIGDVMEGNSVGTRFHAQASPLENRKRWIFGAPPAGEITVDEGATAAILERGSSLLPKGIKSVTGNFSRGEVIRICNQQGRDIAHGVSRYNSDALRRIAGHHSQQIDAILGYEYGPVAVHRDDMITR</sequence>
<feature type="chain" id="PRO_1000081102" description="Glutamate 5-kinase">
    <location>
        <begin position="1"/>
        <end position="367"/>
    </location>
</feature>
<feature type="domain" description="PUA" evidence="1">
    <location>
        <begin position="275"/>
        <end position="353"/>
    </location>
</feature>
<feature type="binding site" evidence="1">
    <location>
        <position position="10"/>
    </location>
    <ligand>
        <name>ATP</name>
        <dbReference type="ChEBI" id="CHEBI:30616"/>
    </ligand>
</feature>
<feature type="binding site" evidence="1">
    <location>
        <position position="50"/>
    </location>
    <ligand>
        <name>substrate</name>
    </ligand>
</feature>
<feature type="binding site" evidence="1">
    <location>
        <position position="137"/>
    </location>
    <ligand>
        <name>substrate</name>
    </ligand>
</feature>
<feature type="binding site" evidence="1">
    <location>
        <position position="149"/>
    </location>
    <ligand>
        <name>substrate</name>
    </ligand>
</feature>
<feature type="binding site" evidence="1">
    <location>
        <begin position="169"/>
        <end position="170"/>
    </location>
    <ligand>
        <name>ATP</name>
        <dbReference type="ChEBI" id="CHEBI:30616"/>
    </ligand>
</feature>
<feature type="binding site" evidence="1">
    <location>
        <begin position="211"/>
        <end position="217"/>
    </location>
    <ligand>
        <name>ATP</name>
        <dbReference type="ChEBI" id="CHEBI:30616"/>
    </ligand>
</feature>
<keyword id="KW-0028">Amino-acid biosynthesis</keyword>
<keyword id="KW-0067">ATP-binding</keyword>
<keyword id="KW-0963">Cytoplasm</keyword>
<keyword id="KW-0418">Kinase</keyword>
<keyword id="KW-0547">Nucleotide-binding</keyword>
<keyword id="KW-0641">Proline biosynthesis</keyword>
<keyword id="KW-1185">Reference proteome</keyword>
<keyword id="KW-0808">Transferase</keyword>
<dbReference type="EC" id="2.7.2.11" evidence="1"/>
<dbReference type="EMBL" id="CP000880">
    <property type="protein sequence ID" value="ABX22547.1"/>
    <property type="molecule type" value="Genomic_DNA"/>
</dbReference>
<dbReference type="SMR" id="A9MNR5"/>
<dbReference type="STRING" id="41514.SARI_02691"/>
<dbReference type="KEGG" id="ses:SARI_02691"/>
<dbReference type="HOGENOM" id="CLU_025400_2_0_6"/>
<dbReference type="UniPathway" id="UPA00098">
    <property type="reaction ID" value="UER00359"/>
</dbReference>
<dbReference type="Proteomes" id="UP000002084">
    <property type="component" value="Chromosome"/>
</dbReference>
<dbReference type="GO" id="GO:0005829">
    <property type="term" value="C:cytosol"/>
    <property type="evidence" value="ECO:0007669"/>
    <property type="project" value="TreeGrafter"/>
</dbReference>
<dbReference type="GO" id="GO:0005524">
    <property type="term" value="F:ATP binding"/>
    <property type="evidence" value="ECO:0007669"/>
    <property type="project" value="UniProtKB-KW"/>
</dbReference>
<dbReference type="GO" id="GO:0004349">
    <property type="term" value="F:glutamate 5-kinase activity"/>
    <property type="evidence" value="ECO:0007669"/>
    <property type="project" value="UniProtKB-UniRule"/>
</dbReference>
<dbReference type="GO" id="GO:0003723">
    <property type="term" value="F:RNA binding"/>
    <property type="evidence" value="ECO:0007669"/>
    <property type="project" value="InterPro"/>
</dbReference>
<dbReference type="GO" id="GO:0055129">
    <property type="term" value="P:L-proline biosynthetic process"/>
    <property type="evidence" value="ECO:0007669"/>
    <property type="project" value="UniProtKB-UniRule"/>
</dbReference>
<dbReference type="CDD" id="cd04242">
    <property type="entry name" value="AAK_G5K_ProB"/>
    <property type="match status" value="1"/>
</dbReference>
<dbReference type="CDD" id="cd21157">
    <property type="entry name" value="PUA_G5K"/>
    <property type="match status" value="1"/>
</dbReference>
<dbReference type="FunFam" id="2.30.130.10:FF:000003">
    <property type="entry name" value="Glutamate 5-kinase"/>
    <property type="match status" value="1"/>
</dbReference>
<dbReference type="FunFam" id="3.40.1160.10:FF:000006">
    <property type="entry name" value="Glutamate 5-kinase"/>
    <property type="match status" value="1"/>
</dbReference>
<dbReference type="Gene3D" id="3.40.1160.10">
    <property type="entry name" value="Acetylglutamate kinase-like"/>
    <property type="match status" value="2"/>
</dbReference>
<dbReference type="Gene3D" id="2.30.130.10">
    <property type="entry name" value="PUA domain"/>
    <property type="match status" value="1"/>
</dbReference>
<dbReference type="HAMAP" id="MF_00456">
    <property type="entry name" value="ProB"/>
    <property type="match status" value="1"/>
</dbReference>
<dbReference type="InterPro" id="IPR036393">
    <property type="entry name" value="AceGlu_kinase-like_sf"/>
</dbReference>
<dbReference type="InterPro" id="IPR001048">
    <property type="entry name" value="Asp/Glu/Uridylate_kinase"/>
</dbReference>
<dbReference type="InterPro" id="IPR041739">
    <property type="entry name" value="G5K_ProB"/>
</dbReference>
<dbReference type="InterPro" id="IPR001057">
    <property type="entry name" value="Glu/AcGlu_kinase"/>
</dbReference>
<dbReference type="InterPro" id="IPR011529">
    <property type="entry name" value="Glu_5kinase"/>
</dbReference>
<dbReference type="InterPro" id="IPR005715">
    <property type="entry name" value="Glu_5kinase/COase_Synthase"/>
</dbReference>
<dbReference type="InterPro" id="IPR019797">
    <property type="entry name" value="Glutamate_5-kinase_CS"/>
</dbReference>
<dbReference type="InterPro" id="IPR002478">
    <property type="entry name" value="PUA"/>
</dbReference>
<dbReference type="InterPro" id="IPR015947">
    <property type="entry name" value="PUA-like_sf"/>
</dbReference>
<dbReference type="InterPro" id="IPR036974">
    <property type="entry name" value="PUA_sf"/>
</dbReference>
<dbReference type="NCBIfam" id="TIGR01027">
    <property type="entry name" value="proB"/>
    <property type="match status" value="1"/>
</dbReference>
<dbReference type="PANTHER" id="PTHR43654">
    <property type="entry name" value="GLUTAMATE 5-KINASE"/>
    <property type="match status" value="1"/>
</dbReference>
<dbReference type="PANTHER" id="PTHR43654:SF1">
    <property type="entry name" value="ISOPENTENYL PHOSPHATE KINASE"/>
    <property type="match status" value="1"/>
</dbReference>
<dbReference type="Pfam" id="PF00696">
    <property type="entry name" value="AA_kinase"/>
    <property type="match status" value="1"/>
</dbReference>
<dbReference type="Pfam" id="PF01472">
    <property type="entry name" value="PUA"/>
    <property type="match status" value="1"/>
</dbReference>
<dbReference type="PIRSF" id="PIRSF000729">
    <property type="entry name" value="GK"/>
    <property type="match status" value="1"/>
</dbReference>
<dbReference type="PRINTS" id="PR00474">
    <property type="entry name" value="GLU5KINASE"/>
</dbReference>
<dbReference type="SMART" id="SM00359">
    <property type="entry name" value="PUA"/>
    <property type="match status" value="1"/>
</dbReference>
<dbReference type="SUPFAM" id="SSF53633">
    <property type="entry name" value="Carbamate kinase-like"/>
    <property type="match status" value="1"/>
</dbReference>
<dbReference type="SUPFAM" id="SSF88697">
    <property type="entry name" value="PUA domain-like"/>
    <property type="match status" value="1"/>
</dbReference>
<dbReference type="PROSITE" id="PS00902">
    <property type="entry name" value="GLUTAMATE_5_KINASE"/>
    <property type="match status" value="1"/>
</dbReference>
<dbReference type="PROSITE" id="PS50890">
    <property type="entry name" value="PUA"/>
    <property type="match status" value="1"/>
</dbReference>